<evidence type="ECO:0000255" key="1">
    <source>
        <dbReference type="HAMAP-Rule" id="MF_01462"/>
    </source>
</evidence>
<dbReference type="EMBL" id="CP001338">
    <property type="protein sequence ID" value="ACL17618.1"/>
    <property type="molecule type" value="Genomic_DNA"/>
</dbReference>
<dbReference type="RefSeq" id="WP_012618937.1">
    <property type="nucleotide sequence ID" value="NC_011832.1"/>
</dbReference>
<dbReference type="SMR" id="B8GEB7"/>
<dbReference type="STRING" id="521011.Mpal_2333"/>
<dbReference type="GeneID" id="7272054"/>
<dbReference type="KEGG" id="mpl:Mpal_2333"/>
<dbReference type="eggNOG" id="arCOG02248">
    <property type="taxonomic scope" value="Archaea"/>
</dbReference>
<dbReference type="HOGENOM" id="CLU_052508_3_0_2"/>
<dbReference type="OrthoDB" id="30946at2157"/>
<dbReference type="UniPathway" id="UPA00148"/>
<dbReference type="Proteomes" id="UP000002457">
    <property type="component" value="Chromosome"/>
</dbReference>
<dbReference type="GO" id="GO:0043190">
    <property type="term" value="C:ATP-binding cassette (ABC) transporter complex"/>
    <property type="evidence" value="ECO:0007669"/>
    <property type="project" value="InterPro"/>
</dbReference>
<dbReference type="GO" id="GO:0015087">
    <property type="term" value="F:cobalt ion transmembrane transporter activity"/>
    <property type="evidence" value="ECO:0007669"/>
    <property type="project" value="UniProtKB-UniRule"/>
</dbReference>
<dbReference type="GO" id="GO:0009236">
    <property type="term" value="P:cobalamin biosynthetic process"/>
    <property type="evidence" value="ECO:0007669"/>
    <property type="project" value="UniProtKB-UniRule"/>
</dbReference>
<dbReference type="FunFam" id="1.10.1760.20:FF:000001">
    <property type="entry name" value="Cobalt transport protein CbiM"/>
    <property type="match status" value="1"/>
</dbReference>
<dbReference type="Gene3D" id="1.10.1760.20">
    <property type="match status" value="1"/>
</dbReference>
<dbReference type="HAMAP" id="MF_01462">
    <property type="entry name" value="CbiM"/>
    <property type="match status" value="1"/>
</dbReference>
<dbReference type="InterPro" id="IPR018024">
    <property type="entry name" value="CbiM"/>
</dbReference>
<dbReference type="InterPro" id="IPR002751">
    <property type="entry name" value="CbiM/NikMN"/>
</dbReference>
<dbReference type="NCBIfam" id="TIGR00123">
    <property type="entry name" value="cbiM"/>
    <property type="match status" value="1"/>
</dbReference>
<dbReference type="NCBIfam" id="NF006184">
    <property type="entry name" value="PRK08319.1"/>
    <property type="match status" value="1"/>
</dbReference>
<dbReference type="PANTHER" id="PTHR43627">
    <property type="match status" value="1"/>
</dbReference>
<dbReference type="PANTHER" id="PTHR43627:SF1">
    <property type="entry name" value="COBALT TRANSPORT PROTEIN CBIM"/>
    <property type="match status" value="1"/>
</dbReference>
<dbReference type="Pfam" id="PF01891">
    <property type="entry name" value="CbiM"/>
    <property type="match status" value="1"/>
</dbReference>
<organism>
    <name type="scientific">Methanosphaerula palustris (strain ATCC BAA-1556 / DSM 19958 / E1-9c)</name>
    <dbReference type="NCBI Taxonomy" id="521011"/>
    <lineage>
        <taxon>Archaea</taxon>
        <taxon>Methanobacteriati</taxon>
        <taxon>Methanobacteriota</taxon>
        <taxon>Stenosarchaea group</taxon>
        <taxon>Methanomicrobia</taxon>
        <taxon>Methanomicrobiales</taxon>
        <taxon>Methanoregulaceae</taxon>
        <taxon>Methanosphaerula</taxon>
    </lineage>
</organism>
<name>CBIM2_METPE</name>
<protein>
    <recommendedName>
        <fullName evidence="1">Putative cobalt transport protein CbiM 2</fullName>
    </recommendedName>
    <alternativeName>
        <fullName evidence="1">Energy-coupling factor transporter probable substrate-capture protein CbiM 2</fullName>
        <shortName evidence="1">ECF transporter S component CbiM 2</shortName>
    </alternativeName>
</protein>
<feature type="chain" id="PRO_0000411162" description="Putative cobalt transport protein CbiM 2">
    <location>
        <begin position="1"/>
        <end position="235"/>
    </location>
</feature>
<feature type="transmembrane region" description="Helical" evidence="1">
    <location>
        <begin position="9"/>
        <end position="29"/>
    </location>
</feature>
<feature type="transmembrane region" description="Helical" evidence="1">
    <location>
        <begin position="41"/>
        <end position="61"/>
    </location>
</feature>
<feature type="transmembrane region" description="Helical" evidence="1">
    <location>
        <begin position="80"/>
        <end position="100"/>
    </location>
</feature>
<feature type="transmembrane region" description="Helical" evidence="1">
    <location>
        <begin position="107"/>
        <end position="127"/>
    </location>
</feature>
<feature type="transmembrane region" description="Helical" evidence="1">
    <location>
        <begin position="135"/>
        <end position="155"/>
    </location>
</feature>
<feature type="transmembrane region" description="Helical" evidence="1">
    <location>
        <begin position="160"/>
        <end position="180"/>
    </location>
</feature>
<feature type="transmembrane region" description="Helical" evidence="1">
    <location>
        <begin position="181"/>
        <end position="201"/>
    </location>
</feature>
<accession>B8GEB7</accession>
<sequence length="235" mass="25294">MHIMEGFLPAGWCLVWWLIALPFLVMGIIQLRRMMKEDREYLPLLGVCGAFIFILSALKLPSVTGSCSHPTGTGLSTICFGYCVTAVVGAIVLLFQALLLAHGGLSTMGANMVSMAIGGPIAGYAVYKLMKDTSINIYVTVFLASAVADIVTYIITSFELALAYPAQVGGFLASFSAFFSIFAITQIPLSIMEGVVLALVFKYIIQLKPEIILKLHVFSEEQIAKARLAGDAEVA</sequence>
<keyword id="KW-1003">Cell membrane</keyword>
<keyword id="KW-0169">Cobalamin biosynthesis</keyword>
<keyword id="KW-0170">Cobalt</keyword>
<keyword id="KW-0171">Cobalt transport</keyword>
<keyword id="KW-0406">Ion transport</keyword>
<keyword id="KW-0472">Membrane</keyword>
<keyword id="KW-1185">Reference proteome</keyword>
<keyword id="KW-0812">Transmembrane</keyword>
<keyword id="KW-1133">Transmembrane helix</keyword>
<keyword id="KW-0813">Transport</keyword>
<gene>
    <name evidence="1" type="primary">cbiM2</name>
    <name type="ordered locus">Mpal_2333</name>
</gene>
<comment type="function">
    <text evidence="1">Part of the energy-coupling factor (ECF) transporter complex CbiMNOQ involved in cobalt import.</text>
</comment>
<comment type="pathway">
    <text evidence="1">Cofactor biosynthesis; adenosylcobalamin biosynthesis.</text>
</comment>
<comment type="subunit">
    <text evidence="1">Forms an energy-coupling factor (ECF) transporter complex composed of an ATP-binding protein (A component, CbiO), a transmembrane protein (T component, CbiQ) and 2 possible substrate-capture proteins (S components, CbiM and CbiN) of unknown stoichimetry.</text>
</comment>
<comment type="subcellular location">
    <subcellularLocation>
        <location evidence="1">Cell membrane</location>
        <topology evidence="1">Multi-pass membrane protein</topology>
    </subcellularLocation>
</comment>
<comment type="similarity">
    <text evidence="1">Belongs to the CbiM family.</text>
</comment>
<reference key="1">
    <citation type="journal article" date="2015" name="Genome Announc.">
        <title>Complete Genome Sequence of Methanosphaerula palustris E1-9CT, a Hydrogenotrophic Methanogen Isolated from a Minerotrophic Fen Peatland.</title>
        <authorList>
            <person name="Cadillo-Quiroz H."/>
            <person name="Browne P."/>
            <person name="Kyrpides N."/>
            <person name="Woyke T."/>
            <person name="Goodwin L."/>
            <person name="Detter C."/>
            <person name="Yavitt J.B."/>
            <person name="Zinder S.H."/>
        </authorList>
    </citation>
    <scope>NUCLEOTIDE SEQUENCE [LARGE SCALE GENOMIC DNA]</scope>
    <source>
        <strain>ATCC BAA-1556 / DSM 19958 / E1-9c</strain>
    </source>
</reference>
<proteinExistence type="inferred from homology"/>